<protein>
    <recommendedName>
        <fullName>BURP domain-containing protein 16</fullName>
        <shortName>OsBURP16</shortName>
    </recommendedName>
    <alternativeName>
        <fullName>Protein WGP1</fullName>
        <shortName>OsWGP1</shortName>
    </alternativeName>
</protein>
<sequence length="344" mass="37390">MATSFLFSLILLLITALSLPFPLHASSVDPLSAGATTVRYWNRKIPNNAPHPDFFLSLLSPLPASVSSSLSSPLSISPSICRSARLLCPNSTYFQSLSSTVFIDGCTFSYSCTFTYEHTNITIKPGIFFREQELKEGNVVRMPDIANELTTARSSFLPRSIADRIPFKAEAVKSLFGLEPNTTLAKAVDETVAQCQSSPSKGETKRCVTSAEDMIDFAVAMLGDDIVVRSTVLPNGPGESIMIGKVKGINGGKITSSVSCHEYLFPYMVYYCHSVPKIRVYEAEILSVQTKEKINSGVAICHIDTSAWNAGHPAFVALGGKPGQNKVCHWIFNGSMTWVIADKS</sequence>
<gene>
    <name type="primary">BURP16</name>
    <name type="synonym">WGP1</name>
    <name type="ordered locus">Os10g0409400</name>
    <name type="ordered locus">LOC_Os10g26940</name>
    <name type="ORF">OsJ_31485</name>
</gene>
<proteinExistence type="evidence at transcript level"/>
<feature type="signal peptide" evidence="1">
    <location>
        <begin position="1"/>
        <end position="25"/>
    </location>
</feature>
<feature type="chain" id="PRO_0000375843" description="BURP domain-containing protein 16">
    <location>
        <begin position="26"/>
        <end position="344"/>
    </location>
</feature>
<feature type="domain" description="BURP" evidence="2">
    <location>
        <begin position="128"/>
        <end position="341"/>
    </location>
</feature>
<feature type="glycosylation site" description="N-linked (GlcNAc...) asparagine" evidence="1">
    <location>
        <position position="90"/>
    </location>
</feature>
<feature type="glycosylation site" description="N-linked (GlcNAc...) asparagine" evidence="1">
    <location>
        <position position="120"/>
    </location>
</feature>
<feature type="glycosylation site" description="N-linked (GlcNAc...) asparagine" evidence="1">
    <location>
        <position position="181"/>
    </location>
</feature>
<feature type="glycosylation site" description="N-linked (GlcNAc...) asparagine" evidence="1">
    <location>
        <position position="333"/>
    </location>
</feature>
<reference key="1">
    <citation type="submission" date="2007-05" db="EMBL/GenBank/DDBJ databases">
        <title>cDNA cloning of a cell wall protein from rice.</title>
        <authorList>
            <person name="Zhou S."/>
            <person name="Li H."/>
            <person name="Peng Y."/>
        </authorList>
    </citation>
    <scope>NUCLEOTIDE SEQUENCE [MRNA]</scope>
    <source>
        <strain>cv. Aichi asahi</strain>
    </source>
</reference>
<reference key="2">
    <citation type="journal article" date="2003" name="Science">
        <title>In-depth view of structure, activity, and evolution of rice chromosome 10.</title>
        <authorList>
            <person name="Yu Y."/>
            <person name="Rambo T."/>
            <person name="Currie J."/>
            <person name="Saski C."/>
            <person name="Kim H.-R."/>
            <person name="Collura K."/>
            <person name="Thompson S."/>
            <person name="Simmons J."/>
            <person name="Yang T.-J."/>
            <person name="Nah G."/>
            <person name="Patel A.J."/>
            <person name="Thurmond S."/>
            <person name="Henry D."/>
            <person name="Oates R."/>
            <person name="Palmer M."/>
            <person name="Pries G."/>
            <person name="Gibson J."/>
            <person name="Anderson H."/>
            <person name="Paradkar M."/>
            <person name="Crane L."/>
            <person name="Dale J."/>
            <person name="Carver M.B."/>
            <person name="Wood T."/>
            <person name="Frisch D."/>
            <person name="Engler F."/>
            <person name="Soderlund C."/>
            <person name="Palmer L.E."/>
            <person name="Teytelman L."/>
            <person name="Nascimento L."/>
            <person name="De la Bastide M."/>
            <person name="Spiegel L."/>
            <person name="Ware D."/>
            <person name="O'Shaughnessy A."/>
            <person name="Dike S."/>
            <person name="Dedhia N."/>
            <person name="Preston R."/>
            <person name="Huang E."/>
            <person name="Ferraro K."/>
            <person name="Kuit K."/>
            <person name="Miller B."/>
            <person name="Zutavern T."/>
            <person name="Katzenberger F."/>
            <person name="Muller S."/>
            <person name="Balija V."/>
            <person name="Martienssen R.A."/>
            <person name="Stein L."/>
            <person name="Minx P."/>
            <person name="Johnson D."/>
            <person name="Cordum H."/>
            <person name="Mardis E."/>
            <person name="Cheng Z."/>
            <person name="Jiang J."/>
            <person name="Wilson R."/>
            <person name="McCombie W.R."/>
            <person name="Wing R.A."/>
            <person name="Yuan Q."/>
            <person name="Ouyang S."/>
            <person name="Liu J."/>
            <person name="Jones K.M."/>
            <person name="Gansberger K."/>
            <person name="Moffat K."/>
            <person name="Hill J."/>
            <person name="Tsitrin T."/>
            <person name="Overton L."/>
            <person name="Bera J."/>
            <person name="Kim M."/>
            <person name="Jin S."/>
            <person name="Tallon L."/>
            <person name="Ciecko A."/>
            <person name="Pai G."/>
            <person name="Van Aken S."/>
            <person name="Utterback T."/>
            <person name="Reidmuller S."/>
            <person name="Bormann J."/>
            <person name="Feldblyum T."/>
            <person name="Hsiao J."/>
            <person name="Zismann V."/>
            <person name="Blunt S."/>
            <person name="de Vazeille A.R."/>
            <person name="Shaffer T."/>
            <person name="Koo H."/>
            <person name="Suh B."/>
            <person name="Yang Q."/>
            <person name="Haas B."/>
            <person name="Peterson J."/>
            <person name="Pertea M."/>
            <person name="Volfovsky N."/>
            <person name="Wortman J."/>
            <person name="White O."/>
            <person name="Salzberg S.L."/>
            <person name="Fraser C.M."/>
            <person name="Buell C.R."/>
            <person name="Messing J."/>
            <person name="Song R."/>
            <person name="Fuks G."/>
            <person name="Llaca V."/>
            <person name="Kovchak S."/>
            <person name="Young S."/>
            <person name="Bowers J.E."/>
            <person name="Paterson A.H."/>
            <person name="Johns M.A."/>
            <person name="Mao L."/>
            <person name="Pan H."/>
            <person name="Dean R.A."/>
        </authorList>
    </citation>
    <scope>NUCLEOTIDE SEQUENCE [LARGE SCALE GENOMIC DNA]</scope>
    <source>
        <strain>cv. Nipponbare</strain>
    </source>
</reference>
<reference key="3">
    <citation type="journal article" date="2005" name="Nature">
        <title>The map-based sequence of the rice genome.</title>
        <authorList>
            <consortium name="International rice genome sequencing project (IRGSP)"/>
        </authorList>
    </citation>
    <scope>NUCLEOTIDE SEQUENCE [LARGE SCALE GENOMIC DNA]</scope>
    <source>
        <strain>cv. Nipponbare</strain>
    </source>
</reference>
<reference key="4">
    <citation type="journal article" date="2008" name="Nucleic Acids Res.">
        <title>The rice annotation project database (RAP-DB): 2008 update.</title>
        <authorList>
            <consortium name="The rice annotation project (RAP)"/>
        </authorList>
    </citation>
    <scope>GENOME REANNOTATION</scope>
    <source>
        <strain>cv. Nipponbare</strain>
    </source>
</reference>
<reference key="5">
    <citation type="journal article" date="2013" name="Rice">
        <title>Improvement of the Oryza sativa Nipponbare reference genome using next generation sequence and optical map data.</title>
        <authorList>
            <person name="Kawahara Y."/>
            <person name="de la Bastide M."/>
            <person name="Hamilton J.P."/>
            <person name="Kanamori H."/>
            <person name="McCombie W.R."/>
            <person name="Ouyang S."/>
            <person name="Schwartz D.C."/>
            <person name="Tanaka T."/>
            <person name="Wu J."/>
            <person name="Zhou S."/>
            <person name="Childs K.L."/>
            <person name="Davidson R.M."/>
            <person name="Lin H."/>
            <person name="Quesada-Ocampo L."/>
            <person name="Vaillancourt B."/>
            <person name="Sakai H."/>
            <person name="Lee S.S."/>
            <person name="Kim J."/>
            <person name="Numa H."/>
            <person name="Itoh T."/>
            <person name="Buell C.R."/>
            <person name="Matsumoto T."/>
        </authorList>
    </citation>
    <scope>GENOME REANNOTATION</scope>
    <source>
        <strain>cv. Nipponbare</strain>
    </source>
</reference>
<reference key="6">
    <citation type="journal article" date="2005" name="PLoS Biol.">
        <title>The genomes of Oryza sativa: a history of duplications.</title>
        <authorList>
            <person name="Yu J."/>
            <person name="Wang J."/>
            <person name="Lin W."/>
            <person name="Li S."/>
            <person name="Li H."/>
            <person name="Zhou J."/>
            <person name="Ni P."/>
            <person name="Dong W."/>
            <person name="Hu S."/>
            <person name="Zeng C."/>
            <person name="Zhang J."/>
            <person name="Zhang Y."/>
            <person name="Li R."/>
            <person name="Xu Z."/>
            <person name="Li S."/>
            <person name="Li X."/>
            <person name="Zheng H."/>
            <person name="Cong L."/>
            <person name="Lin L."/>
            <person name="Yin J."/>
            <person name="Geng J."/>
            <person name="Li G."/>
            <person name="Shi J."/>
            <person name="Liu J."/>
            <person name="Lv H."/>
            <person name="Li J."/>
            <person name="Wang J."/>
            <person name="Deng Y."/>
            <person name="Ran L."/>
            <person name="Shi X."/>
            <person name="Wang X."/>
            <person name="Wu Q."/>
            <person name="Li C."/>
            <person name="Ren X."/>
            <person name="Wang J."/>
            <person name="Wang X."/>
            <person name="Li D."/>
            <person name="Liu D."/>
            <person name="Zhang X."/>
            <person name="Ji Z."/>
            <person name="Zhao W."/>
            <person name="Sun Y."/>
            <person name="Zhang Z."/>
            <person name="Bao J."/>
            <person name="Han Y."/>
            <person name="Dong L."/>
            <person name="Ji J."/>
            <person name="Chen P."/>
            <person name="Wu S."/>
            <person name="Liu J."/>
            <person name="Xiao Y."/>
            <person name="Bu D."/>
            <person name="Tan J."/>
            <person name="Yang L."/>
            <person name="Ye C."/>
            <person name="Zhang J."/>
            <person name="Xu J."/>
            <person name="Zhou Y."/>
            <person name="Yu Y."/>
            <person name="Zhang B."/>
            <person name="Zhuang S."/>
            <person name="Wei H."/>
            <person name="Liu B."/>
            <person name="Lei M."/>
            <person name="Yu H."/>
            <person name="Li Y."/>
            <person name="Xu H."/>
            <person name="Wei S."/>
            <person name="He X."/>
            <person name="Fang L."/>
            <person name="Zhang Z."/>
            <person name="Zhang Y."/>
            <person name="Huang X."/>
            <person name="Su Z."/>
            <person name="Tong W."/>
            <person name="Li J."/>
            <person name="Tong Z."/>
            <person name="Li S."/>
            <person name="Ye J."/>
            <person name="Wang L."/>
            <person name="Fang L."/>
            <person name="Lei T."/>
            <person name="Chen C.-S."/>
            <person name="Chen H.-C."/>
            <person name="Xu Z."/>
            <person name="Li H."/>
            <person name="Huang H."/>
            <person name="Zhang F."/>
            <person name="Xu H."/>
            <person name="Li N."/>
            <person name="Zhao C."/>
            <person name="Li S."/>
            <person name="Dong L."/>
            <person name="Huang Y."/>
            <person name="Li L."/>
            <person name="Xi Y."/>
            <person name="Qi Q."/>
            <person name="Li W."/>
            <person name="Zhang B."/>
            <person name="Hu W."/>
            <person name="Zhang Y."/>
            <person name="Tian X."/>
            <person name="Jiao Y."/>
            <person name="Liang X."/>
            <person name="Jin J."/>
            <person name="Gao L."/>
            <person name="Zheng W."/>
            <person name="Hao B."/>
            <person name="Liu S.-M."/>
            <person name="Wang W."/>
            <person name="Yuan L."/>
            <person name="Cao M."/>
            <person name="McDermott J."/>
            <person name="Samudrala R."/>
            <person name="Wang J."/>
            <person name="Wong G.K.-S."/>
            <person name="Yang H."/>
        </authorList>
    </citation>
    <scope>NUCLEOTIDE SEQUENCE [LARGE SCALE GENOMIC DNA]</scope>
    <source>
        <strain>cv. Nipponbare</strain>
    </source>
</reference>
<reference key="7">
    <citation type="journal article" date="2003" name="Science">
        <title>Collection, mapping, and annotation of over 28,000 cDNA clones from japonica rice.</title>
        <authorList>
            <consortium name="The rice full-length cDNA consortium"/>
        </authorList>
    </citation>
    <scope>NUCLEOTIDE SEQUENCE [LARGE SCALE MRNA]</scope>
    <source>
        <strain>cv. Nipponbare</strain>
    </source>
</reference>
<reference key="8">
    <citation type="journal article" date="2009" name="Planta">
        <title>Genome-wide identification of BURP domain-containing genes in rice reveals a gene family with diverse structures and responses to abiotic stresses.</title>
        <authorList>
            <person name="Ding X."/>
            <person name="Hou X."/>
            <person name="Xie K."/>
            <person name="Xiong L."/>
        </authorList>
    </citation>
    <scope>TISSUE SPECIFICITY</scope>
    <scope>GENE NOMENCLATURE</scope>
</reference>
<dbReference type="EMBL" id="EF633512">
    <property type="protein sequence ID" value="ABR23532.1"/>
    <property type="molecule type" value="mRNA"/>
</dbReference>
<dbReference type="EMBL" id="DP000086">
    <property type="protein sequence ID" value="AAP53713.1"/>
    <property type="molecule type" value="Genomic_DNA"/>
</dbReference>
<dbReference type="EMBL" id="AP008216">
    <property type="protein sequence ID" value="BAF26486.1"/>
    <property type="molecule type" value="Genomic_DNA"/>
</dbReference>
<dbReference type="EMBL" id="AP014966">
    <property type="protein sequence ID" value="BAT10797.1"/>
    <property type="molecule type" value="Genomic_DNA"/>
</dbReference>
<dbReference type="EMBL" id="CM000147">
    <property type="protein sequence ID" value="EAZ16044.1"/>
    <property type="molecule type" value="Genomic_DNA"/>
</dbReference>
<dbReference type="EMBL" id="AK120091">
    <property type="protein sequence ID" value="BAG99870.1"/>
    <property type="molecule type" value="mRNA"/>
</dbReference>
<dbReference type="RefSeq" id="XP_015613275.1">
    <property type="nucleotide sequence ID" value="XM_015757789.1"/>
</dbReference>
<dbReference type="STRING" id="39947.Q7XES5"/>
<dbReference type="GlyCosmos" id="Q7XES5">
    <property type="glycosylation" value="4 sites, No reported glycans"/>
</dbReference>
<dbReference type="PaxDb" id="39947-Q7XES5"/>
<dbReference type="EnsemblPlants" id="Os10t0409400-01">
    <property type="protein sequence ID" value="Os10t0409400-01"/>
    <property type="gene ID" value="Os10g0409400"/>
</dbReference>
<dbReference type="Gramene" id="Os10t0409400-01">
    <property type="protein sequence ID" value="Os10t0409400-01"/>
    <property type="gene ID" value="Os10g0409400"/>
</dbReference>
<dbReference type="KEGG" id="dosa:Os10g0409400"/>
<dbReference type="eggNOG" id="ENOG502QT2V">
    <property type="taxonomic scope" value="Eukaryota"/>
</dbReference>
<dbReference type="HOGENOM" id="CLU_011822_5_1_1"/>
<dbReference type="InParanoid" id="Q7XES5"/>
<dbReference type="OMA" id="NNAPHPD"/>
<dbReference type="OrthoDB" id="1909293at2759"/>
<dbReference type="Proteomes" id="UP000000763">
    <property type="component" value="Chromosome 10"/>
</dbReference>
<dbReference type="Proteomes" id="UP000007752">
    <property type="component" value="Chromosome 10"/>
</dbReference>
<dbReference type="Proteomes" id="UP000059680">
    <property type="component" value="Chromosome 10"/>
</dbReference>
<dbReference type="InterPro" id="IPR004873">
    <property type="entry name" value="BURP_dom"/>
</dbReference>
<dbReference type="InterPro" id="IPR051897">
    <property type="entry name" value="PG-associated_BURP"/>
</dbReference>
<dbReference type="PANTHER" id="PTHR31458">
    <property type="entry name" value="POLYGALACTURONASE 1 BETA-LIKE PROTEIN 2"/>
    <property type="match status" value="1"/>
</dbReference>
<dbReference type="PANTHER" id="PTHR31458:SF2">
    <property type="entry name" value="POLYGALACTURONASE 1 BETA-LIKE PROTEIN 2"/>
    <property type="match status" value="1"/>
</dbReference>
<dbReference type="Pfam" id="PF03181">
    <property type="entry name" value="BURP"/>
    <property type="match status" value="1"/>
</dbReference>
<dbReference type="SMART" id="SM01045">
    <property type="entry name" value="BURP"/>
    <property type="match status" value="1"/>
</dbReference>
<dbReference type="PROSITE" id="PS51277">
    <property type="entry name" value="BURP"/>
    <property type="match status" value="1"/>
</dbReference>
<name>BURPG_ORYSJ</name>
<comment type="tissue specificity">
    <text evidence="3">Expressed in roots, stems, leaves and panicles.</text>
</comment>
<organism>
    <name type="scientific">Oryza sativa subsp. japonica</name>
    <name type="common">Rice</name>
    <dbReference type="NCBI Taxonomy" id="39947"/>
    <lineage>
        <taxon>Eukaryota</taxon>
        <taxon>Viridiplantae</taxon>
        <taxon>Streptophyta</taxon>
        <taxon>Embryophyta</taxon>
        <taxon>Tracheophyta</taxon>
        <taxon>Spermatophyta</taxon>
        <taxon>Magnoliopsida</taxon>
        <taxon>Liliopsida</taxon>
        <taxon>Poales</taxon>
        <taxon>Poaceae</taxon>
        <taxon>BOP clade</taxon>
        <taxon>Oryzoideae</taxon>
        <taxon>Oryzeae</taxon>
        <taxon>Oryzinae</taxon>
        <taxon>Oryza</taxon>
        <taxon>Oryza sativa</taxon>
    </lineage>
</organism>
<accession>Q7XES5</accession>
<accession>A0A0P0XUS9</accession>
<evidence type="ECO:0000255" key="1"/>
<evidence type="ECO:0000255" key="2">
    <source>
        <dbReference type="PROSITE-ProRule" id="PRU00604"/>
    </source>
</evidence>
<evidence type="ECO:0000269" key="3">
    <source>
    </source>
</evidence>
<keyword id="KW-0325">Glycoprotein</keyword>
<keyword id="KW-1185">Reference proteome</keyword>
<keyword id="KW-0732">Signal</keyword>